<feature type="chain" id="PRO_0000030143" description="S-adenosylmethionine decarboxylase beta chain" evidence="1">
    <location>
        <begin position="1"/>
        <end position="62"/>
    </location>
</feature>
<feature type="chain" id="PRO_0000030144" description="S-adenosylmethionine decarboxylase alpha chain" evidence="1">
    <location>
        <begin position="63"/>
        <end position="139"/>
    </location>
</feature>
<feature type="active site" description="Schiff-base intermediate with substrate; via pyruvic acid" evidence="1">
    <location>
        <position position="63"/>
    </location>
</feature>
<feature type="active site" description="Proton acceptor; for processing activity" evidence="1">
    <location>
        <position position="68"/>
    </location>
</feature>
<feature type="active site" description="Proton donor; for catalytic activity" evidence="1">
    <location>
        <position position="83"/>
    </location>
</feature>
<feature type="site" description="Cleavage (non-hydrolytic); by autolysis" evidence="1">
    <location>
        <begin position="62"/>
        <end position="63"/>
    </location>
</feature>
<feature type="modified residue" description="Pyruvic acid (Ser); by autocatalysis" evidence="1">
    <location>
        <position position="63"/>
    </location>
</feature>
<evidence type="ECO:0000255" key="1">
    <source>
        <dbReference type="HAMAP-Rule" id="MF_00464"/>
    </source>
</evidence>
<keyword id="KW-0068">Autocatalytic cleavage</keyword>
<keyword id="KW-0210">Decarboxylase</keyword>
<keyword id="KW-0456">Lyase</keyword>
<keyword id="KW-0620">Polyamine biosynthesis</keyword>
<keyword id="KW-0670">Pyruvate</keyword>
<keyword id="KW-1185">Reference proteome</keyword>
<keyword id="KW-0949">S-adenosyl-L-methionine</keyword>
<keyword id="KW-0704">Schiff base</keyword>
<keyword id="KW-0745">Spermidine biosynthesis</keyword>
<keyword id="KW-0865">Zymogen</keyword>
<organism>
    <name type="scientific">Pyrococcus furiosus (strain ATCC 43587 / DSM 3638 / JCM 8422 / Vc1)</name>
    <dbReference type="NCBI Taxonomy" id="186497"/>
    <lineage>
        <taxon>Archaea</taxon>
        <taxon>Methanobacteriati</taxon>
        <taxon>Methanobacteriota</taxon>
        <taxon>Thermococci</taxon>
        <taxon>Thermococcales</taxon>
        <taxon>Thermococcaceae</taxon>
        <taxon>Pyrococcus</taxon>
    </lineage>
</organism>
<reference key="1">
    <citation type="journal article" date="1999" name="Genetics">
        <title>Divergence of the hyperthermophilic archaea Pyrococcus furiosus and P. horikoshii inferred from complete genomic sequences.</title>
        <authorList>
            <person name="Maeder D.L."/>
            <person name="Weiss R.B."/>
            <person name="Dunn D.M."/>
            <person name="Cherry J.L."/>
            <person name="Gonzalez J.M."/>
            <person name="DiRuggiero J."/>
            <person name="Robb F.T."/>
        </authorList>
    </citation>
    <scope>NUCLEOTIDE SEQUENCE [LARGE SCALE GENOMIC DNA]</scope>
    <source>
        <strain>ATCC 43587 / DSM 3638 / JCM 8422 / Vc1</strain>
    </source>
</reference>
<dbReference type="EC" id="4.1.1.50" evidence="1"/>
<dbReference type="EMBL" id="AE009950">
    <property type="protein sequence ID" value="AAL82054.1"/>
    <property type="molecule type" value="Genomic_DNA"/>
</dbReference>
<dbReference type="SMR" id="Q8TZQ6"/>
<dbReference type="STRING" id="186497.PF1930"/>
<dbReference type="PaxDb" id="186497-PF1930"/>
<dbReference type="KEGG" id="pfu:PF1930"/>
<dbReference type="PATRIC" id="fig|186497.12.peg.2002"/>
<dbReference type="eggNOG" id="arCOG00279">
    <property type="taxonomic scope" value="Archaea"/>
</dbReference>
<dbReference type="HOGENOM" id="CLU_125470_2_3_2"/>
<dbReference type="OrthoDB" id="114016at2157"/>
<dbReference type="PhylomeDB" id="Q8TZQ6"/>
<dbReference type="UniPathway" id="UPA00331">
    <property type="reaction ID" value="UER00451"/>
</dbReference>
<dbReference type="Proteomes" id="UP000001013">
    <property type="component" value="Chromosome"/>
</dbReference>
<dbReference type="GO" id="GO:0005829">
    <property type="term" value="C:cytosol"/>
    <property type="evidence" value="ECO:0007669"/>
    <property type="project" value="TreeGrafter"/>
</dbReference>
<dbReference type="GO" id="GO:0004014">
    <property type="term" value="F:adenosylmethionine decarboxylase activity"/>
    <property type="evidence" value="ECO:0007669"/>
    <property type="project" value="UniProtKB-UniRule"/>
</dbReference>
<dbReference type="GO" id="GO:0008295">
    <property type="term" value="P:spermidine biosynthetic process"/>
    <property type="evidence" value="ECO:0007669"/>
    <property type="project" value="UniProtKB-UniRule"/>
</dbReference>
<dbReference type="FunFam" id="3.30.360.110:FF:000001">
    <property type="entry name" value="S-adenosylmethionine decarboxylase proenzyme"/>
    <property type="match status" value="1"/>
</dbReference>
<dbReference type="Gene3D" id="3.30.160.750">
    <property type="match status" value="1"/>
</dbReference>
<dbReference type="Gene3D" id="3.30.360.110">
    <property type="entry name" value="S-adenosylmethionine decarboxylase domain"/>
    <property type="match status" value="1"/>
</dbReference>
<dbReference type="HAMAP" id="MF_00464">
    <property type="entry name" value="AdoMetDC_1"/>
    <property type="match status" value="1"/>
</dbReference>
<dbReference type="InterPro" id="IPR042286">
    <property type="entry name" value="AdoMetDC_C"/>
</dbReference>
<dbReference type="InterPro" id="IPR003826">
    <property type="entry name" value="AdoMetDC_fam_prok"/>
</dbReference>
<dbReference type="InterPro" id="IPR042284">
    <property type="entry name" value="AdoMetDC_N"/>
</dbReference>
<dbReference type="InterPro" id="IPR016067">
    <property type="entry name" value="S-AdoMet_deCO2ase_core"/>
</dbReference>
<dbReference type="InterPro" id="IPR017716">
    <property type="entry name" value="S-AdoMet_deCOase_pro-enz"/>
</dbReference>
<dbReference type="NCBIfam" id="TIGR03330">
    <property type="entry name" value="SAM_DCase_Bsu"/>
    <property type="match status" value="1"/>
</dbReference>
<dbReference type="PANTHER" id="PTHR33866">
    <property type="entry name" value="S-ADENOSYLMETHIONINE DECARBOXYLASE PROENZYME"/>
    <property type="match status" value="1"/>
</dbReference>
<dbReference type="PANTHER" id="PTHR33866:SF2">
    <property type="entry name" value="S-ADENOSYLMETHIONINE DECARBOXYLASE PROENZYME"/>
    <property type="match status" value="1"/>
</dbReference>
<dbReference type="Pfam" id="PF02675">
    <property type="entry name" value="AdoMet_dc"/>
    <property type="match status" value="1"/>
</dbReference>
<dbReference type="SUPFAM" id="SSF56276">
    <property type="entry name" value="S-adenosylmethionine decarboxylase"/>
    <property type="match status" value="1"/>
</dbReference>
<sequence>MDTIGYHYVVEAAGCDPEVIADPNKIREIFLEAAKVGNMEVKASYFFKFSPMGVSGVVIVAESHISVHTWPEKGYAALDVYTCGEKADPEKAVDYILEKFKAKYAHVSELKRGIEEEDSTFTHTILTWEEKLDRRNGNK</sequence>
<comment type="function">
    <text evidence="1">Catalyzes the decarboxylation of S-adenosylmethionine to S-adenosylmethioninamine (dcAdoMet), the propylamine donor required for the synthesis of the polyamines spermine and spermidine from the diamine putrescine.</text>
</comment>
<comment type="catalytic activity">
    <reaction evidence="1">
        <text>S-adenosyl-L-methionine + H(+) = S-adenosyl 3-(methylsulfanyl)propylamine + CO2</text>
        <dbReference type="Rhea" id="RHEA:15981"/>
        <dbReference type="ChEBI" id="CHEBI:15378"/>
        <dbReference type="ChEBI" id="CHEBI:16526"/>
        <dbReference type="ChEBI" id="CHEBI:57443"/>
        <dbReference type="ChEBI" id="CHEBI:59789"/>
        <dbReference type="EC" id="4.1.1.50"/>
    </reaction>
</comment>
<comment type="cofactor">
    <cofactor evidence="1">
        <name>pyruvate</name>
        <dbReference type="ChEBI" id="CHEBI:15361"/>
    </cofactor>
    <text evidence="1">Binds 1 pyruvoyl group covalently per subunit.</text>
</comment>
<comment type="pathway">
    <text evidence="1">Amine and polyamine biosynthesis; S-adenosylmethioninamine biosynthesis; S-adenosylmethioninamine from S-adenosyl-L-methionine: step 1/1.</text>
</comment>
<comment type="subunit">
    <text evidence="1">Heterotetramer of two alpha and two beta chains arranged as a dimer of alpha/beta heterodimers.</text>
</comment>
<comment type="PTM">
    <text evidence="1">Is synthesized initially as an inactive proenzyme. Formation of the active enzyme involves a self-maturation process in which the active site pyruvoyl group is generated from an internal serine residue via an autocatalytic post-translational modification. Two non-identical subunits are generated from the proenzyme in this reaction, and the pyruvate is formed at the N-terminus of the alpha chain, which is derived from the carboxyl end of the proenzyme. The post-translation cleavage follows an unusual pathway, termed non-hydrolytic serinolysis, in which the side chain hydroxyl group of the serine supplies its oxygen atom to form the C-terminus of the beta chain, while the remainder of the serine residue undergoes an oxidative deamination to produce ammonia and the pyruvoyl group blocking the N-terminus of the alpha chain.</text>
</comment>
<comment type="similarity">
    <text evidence="1">Belongs to the prokaryotic AdoMetDC family. Type 1 subfamily.</text>
</comment>
<protein>
    <recommendedName>
        <fullName evidence="1">S-adenosylmethionine decarboxylase proenzyme</fullName>
        <shortName evidence="1">AdoMetDC</shortName>
        <shortName evidence="1">SAMDC</shortName>
        <ecNumber evidence="1">4.1.1.50</ecNumber>
    </recommendedName>
    <component>
        <recommendedName>
            <fullName evidence="1">S-adenosylmethionine decarboxylase beta chain</fullName>
        </recommendedName>
    </component>
    <component>
        <recommendedName>
            <fullName evidence="1">S-adenosylmethionine decarboxylase alpha chain</fullName>
        </recommendedName>
    </component>
</protein>
<accession>Q8TZQ6</accession>
<name>SPEH_PYRFU</name>
<proteinExistence type="inferred from homology"/>
<gene>
    <name evidence="1" type="primary">speH</name>
    <name type="ordered locus">PF1930</name>
</gene>